<dbReference type="EMBL" id="AK018184">
    <property type="protein sequence ID" value="BAB31113.1"/>
    <property type="molecule type" value="mRNA"/>
</dbReference>
<dbReference type="EMBL" id="AK083242">
    <property type="protein sequence ID" value="BAC38826.1"/>
    <property type="molecule type" value="mRNA"/>
</dbReference>
<dbReference type="EMBL" id="AK148795">
    <property type="protein sequence ID" value="BAE28665.1"/>
    <property type="molecule type" value="mRNA"/>
</dbReference>
<dbReference type="EMBL" id="AK154941">
    <property type="protein sequence ID" value="BAE32941.1"/>
    <property type="molecule type" value="mRNA"/>
</dbReference>
<dbReference type="EMBL" id="CT010404">
    <property type="protein sequence ID" value="CAJ18610.1"/>
    <property type="molecule type" value="mRNA"/>
</dbReference>
<dbReference type="EMBL" id="BC017648">
    <property type="protein sequence ID" value="AAH17648.1"/>
    <property type="molecule type" value="mRNA"/>
</dbReference>
<dbReference type="EMBL" id="BC049127">
    <property type="protein sequence ID" value="AAH49127.1"/>
    <property type="molecule type" value="mRNA"/>
</dbReference>
<dbReference type="EMBL" id="BC058259">
    <property type="protein sequence ID" value="AAH58259.1"/>
    <property type="molecule type" value="mRNA"/>
</dbReference>
<dbReference type="CCDS" id="CCDS19403.1">
    <molecule id="Q9D394-1"/>
</dbReference>
<dbReference type="CCDS" id="CCDS80323.1">
    <molecule id="Q9D394-4"/>
</dbReference>
<dbReference type="CCDS" id="CCDS80325.1">
    <molecule id="Q9D394-3"/>
</dbReference>
<dbReference type="RefSeq" id="NP_001276704.1">
    <molecule id="Q9D394-4"/>
    <property type="nucleotide sequence ID" value="NM_001289775.2"/>
</dbReference>
<dbReference type="RefSeq" id="NP_001276705.1">
    <molecule id="Q9D394-3"/>
    <property type="nucleotide sequence ID" value="NM_001289776.2"/>
</dbReference>
<dbReference type="RefSeq" id="NP_001276706.1">
    <molecule id="Q9D394-3"/>
    <property type="nucleotide sequence ID" value="NM_001289777.2"/>
</dbReference>
<dbReference type="RefSeq" id="NP_001346137.1">
    <molecule id="Q9D394-1"/>
    <property type="nucleotide sequence ID" value="NM_001359208.2"/>
</dbReference>
<dbReference type="RefSeq" id="NP_081806.1">
    <molecule id="Q9D394-1"/>
    <property type="nucleotide sequence ID" value="NM_027530.4"/>
</dbReference>
<dbReference type="PDB" id="2CXF">
    <property type="method" value="X-ray"/>
    <property type="resolution" value="3.07 A"/>
    <property type="chains" value="A=65-247"/>
</dbReference>
<dbReference type="PDB" id="2CXL">
    <property type="method" value="X-ray"/>
    <property type="resolution" value="3.20 A"/>
    <property type="chains" value="A=65-247"/>
</dbReference>
<dbReference type="PDB" id="2DWG">
    <property type="method" value="X-ray"/>
    <property type="resolution" value="3.22 A"/>
    <property type="chains" value="A/B=65-237"/>
</dbReference>
<dbReference type="PDB" id="2DWK">
    <property type="method" value="X-ray"/>
    <property type="resolution" value="2.00 A"/>
    <property type="chains" value="A=65-237"/>
</dbReference>
<dbReference type="PDBsum" id="2CXF"/>
<dbReference type="PDBsum" id="2CXL"/>
<dbReference type="PDBsum" id="2DWG"/>
<dbReference type="PDBsum" id="2DWK"/>
<dbReference type="SMR" id="Q9D394"/>
<dbReference type="BioGRID" id="206843">
    <property type="interactions" value="23"/>
</dbReference>
<dbReference type="FunCoup" id="Q9D394">
    <property type="interactions" value="925"/>
</dbReference>
<dbReference type="IntAct" id="Q9D394">
    <property type="interactions" value="1"/>
</dbReference>
<dbReference type="MINT" id="Q9D394"/>
<dbReference type="STRING" id="10090.ENSMUSP00000143302"/>
<dbReference type="GlyGen" id="Q9D394">
    <property type="glycosylation" value="1 site, 1 O-linked glycan (1 site)"/>
</dbReference>
<dbReference type="iPTMnet" id="Q9D394"/>
<dbReference type="PhosphoSitePlus" id="Q9D394"/>
<dbReference type="SwissPalm" id="Q9D394"/>
<dbReference type="jPOST" id="Q9D394"/>
<dbReference type="PaxDb" id="10090-ENSMUSP00000031229"/>
<dbReference type="PeptideAtlas" id="Q9D394"/>
<dbReference type="ProteomicsDB" id="256809">
    <molecule id="Q9D394-1"/>
</dbReference>
<dbReference type="ProteomicsDB" id="256810">
    <molecule id="Q9D394-2"/>
</dbReference>
<dbReference type="ProteomicsDB" id="256811">
    <molecule id="Q9D394-3"/>
</dbReference>
<dbReference type="ProteomicsDB" id="256812">
    <molecule id="Q9D394-4"/>
</dbReference>
<dbReference type="Pumba" id="Q9D394"/>
<dbReference type="ABCD" id="Q9D394">
    <property type="antibodies" value="3 sequenced antibodies"/>
</dbReference>
<dbReference type="Antibodypedia" id="12878">
    <property type="antibodies" value="69 antibodies from 23 providers"/>
</dbReference>
<dbReference type="DNASU" id="52822"/>
<dbReference type="Ensembl" id="ENSMUST00000031229.11">
    <molecule id="Q9D394-1"/>
    <property type="protein sequence ID" value="ENSMUSP00000031229.7"/>
    <property type="gene ID" value="ENSMUSG00000029291.12"/>
</dbReference>
<dbReference type="Ensembl" id="ENSMUST00000196686.2">
    <molecule id="Q9D394-3"/>
    <property type="protein sequence ID" value="ENSMUSP00000143209.2"/>
    <property type="gene ID" value="ENSMUSG00000029291.12"/>
</dbReference>
<dbReference type="Ensembl" id="ENSMUST00000196894.5">
    <molecule id="Q9D394-4"/>
    <property type="protein sequence ID" value="ENSMUSP00000143770.2"/>
    <property type="gene ID" value="ENSMUSG00000029291.12"/>
</dbReference>
<dbReference type="Ensembl" id="ENSMUST00000199312.5">
    <molecule id="Q9D394-3"/>
    <property type="protein sequence ID" value="ENSMUSP00000143115.2"/>
    <property type="gene ID" value="ENSMUSG00000029291.12"/>
</dbReference>
<dbReference type="GeneID" id="52822"/>
<dbReference type="KEGG" id="mmu:52822"/>
<dbReference type="UCSC" id="uc008xzw.2">
    <molecule id="Q9D394-4"/>
    <property type="organism name" value="mouse"/>
</dbReference>
<dbReference type="UCSC" id="uc008xzx.2">
    <molecule id="Q9D394-2"/>
    <property type="organism name" value="mouse"/>
</dbReference>
<dbReference type="UCSC" id="uc008xzy.2">
    <molecule id="Q9D394-3"/>
    <property type="organism name" value="mouse"/>
</dbReference>
<dbReference type="UCSC" id="uc008xzz.2">
    <molecule id="Q9D394-1"/>
    <property type="organism name" value="mouse"/>
</dbReference>
<dbReference type="AGR" id="MGI:106484"/>
<dbReference type="CTD" id="22902"/>
<dbReference type="MGI" id="MGI:106484">
    <property type="gene designation" value="Rufy3"/>
</dbReference>
<dbReference type="VEuPathDB" id="HostDB:ENSMUSG00000029291"/>
<dbReference type="eggNOG" id="KOG4381">
    <property type="taxonomic scope" value="Eukaryota"/>
</dbReference>
<dbReference type="GeneTree" id="ENSGT00940000156035"/>
<dbReference type="HOGENOM" id="CLU_014576_0_0_1"/>
<dbReference type="InParanoid" id="Q9D394"/>
<dbReference type="OrthoDB" id="79871at2759"/>
<dbReference type="PhylomeDB" id="Q9D394"/>
<dbReference type="TreeFam" id="TF323904"/>
<dbReference type="BioGRID-ORCS" id="52822">
    <property type="hits" value="0 hits in 76 CRISPR screens"/>
</dbReference>
<dbReference type="CD-CODE" id="CE726F99">
    <property type="entry name" value="Postsynaptic density"/>
</dbReference>
<dbReference type="ChiTaRS" id="Rufy3">
    <property type="organism name" value="mouse"/>
</dbReference>
<dbReference type="EvolutionaryTrace" id="Q9D394"/>
<dbReference type="PRO" id="PR:Q9D394"/>
<dbReference type="Proteomes" id="UP000000589">
    <property type="component" value="Chromosome 5"/>
</dbReference>
<dbReference type="RNAct" id="Q9D394">
    <property type="molecule type" value="protein"/>
</dbReference>
<dbReference type="Bgee" id="ENSMUSG00000029291">
    <property type="expression patterns" value="Expressed in mammillary body and 275 other cell types or tissues"/>
</dbReference>
<dbReference type="ExpressionAtlas" id="Q9D394">
    <property type="expression patterns" value="baseline and differential"/>
</dbReference>
<dbReference type="GO" id="GO:0070161">
    <property type="term" value="C:anchoring junction"/>
    <property type="evidence" value="ECO:0007669"/>
    <property type="project" value="UniProtKB-KW"/>
</dbReference>
<dbReference type="GO" id="GO:0005737">
    <property type="term" value="C:cytoplasm"/>
    <property type="evidence" value="ECO:0000250"/>
    <property type="project" value="UniProtKB"/>
</dbReference>
<dbReference type="GO" id="GO:0030425">
    <property type="term" value="C:dendrite"/>
    <property type="evidence" value="ECO:0000250"/>
    <property type="project" value="UniProtKB"/>
</dbReference>
<dbReference type="GO" id="GO:0036019">
    <property type="term" value="C:endolysosome"/>
    <property type="evidence" value="ECO:0000250"/>
    <property type="project" value="UniProtKB"/>
</dbReference>
<dbReference type="GO" id="GO:0030175">
    <property type="term" value="C:filopodium"/>
    <property type="evidence" value="ECO:0000250"/>
    <property type="project" value="UniProtKB"/>
</dbReference>
<dbReference type="GO" id="GO:0030426">
    <property type="term" value="C:growth cone"/>
    <property type="evidence" value="ECO:0000314"/>
    <property type="project" value="UniProtKB"/>
</dbReference>
<dbReference type="GO" id="GO:0030027">
    <property type="term" value="C:lamellipodium"/>
    <property type="evidence" value="ECO:0000250"/>
    <property type="project" value="UniProtKB"/>
</dbReference>
<dbReference type="GO" id="GO:0016020">
    <property type="term" value="C:membrane"/>
    <property type="evidence" value="ECO:0007669"/>
    <property type="project" value="UniProtKB-KW"/>
</dbReference>
<dbReference type="GO" id="GO:0043204">
    <property type="term" value="C:perikaryon"/>
    <property type="evidence" value="ECO:0000314"/>
    <property type="project" value="UniProtKB"/>
</dbReference>
<dbReference type="GO" id="GO:0034452">
    <property type="term" value="F:dynactin binding"/>
    <property type="evidence" value="ECO:0000250"/>
    <property type="project" value="UniProtKB"/>
</dbReference>
<dbReference type="GO" id="GO:0007015">
    <property type="term" value="P:actin filament organization"/>
    <property type="evidence" value="ECO:0000315"/>
    <property type="project" value="UniProtKB"/>
</dbReference>
<dbReference type="GO" id="GO:0030154">
    <property type="term" value="P:cell differentiation"/>
    <property type="evidence" value="ECO:0007669"/>
    <property type="project" value="UniProtKB-KW"/>
</dbReference>
<dbReference type="GO" id="GO:0050771">
    <property type="term" value="P:negative regulation of axonogenesis"/>
    <property type="evidence" value="ECO:0000250"/>
    <property type="project" value="UniProtKB"/>
</dbReference>
<dbReference type="GO" id="GO:0007399">
    <property type="term" value="P:nervous system development"/>
    <property type="evidence" value="ECO:0007669"/>
    <property type="project" value="UniProtKB-KW"/>
</dbReference>
<dbReference type="GO" id="GO:0045773">
    <property type="term" value="P:positive regulation of axon extension"/>
    <property type="evidence" value="ECO:0000314"/>
    <property type="project" value="UniProtKB"/>
</dbReference>
<dbReference type="GO" id="GO:0050772">
    <property type="term" value="P:positive regulation of axonogenesis"/>
    <property type="evidence" value="ECO:0000314"/>
    <property type="project" value="MGI"/>
</dbReference>
<dbReference type="GO" id="GO:0030335">
    <property type="term" value="P:positive regulation of cell migration"/>
    <property type="evidence" value="ECO:0000250"/>
    <property type="project" value="UniProtKB"/>
</dbReference>
<dbReference type="GO" id="GO:0090316">
    <property type="term" value="P:positive regulation of intracellular protein transport"/>
    <property type="evidence" value="ECO:0000314"/>
    <property type="project" value="UniProtKB"/>
</dbReference>
<dbReference type="GO" id="GO:2001019">
    <property type="term" value="P:positive regulation of retrograde axon cargo transport"/>
    <property type="evidence" value="ECO:0000250"/>
    <property type="project" value="UniProtKB"/>
</dbReference>
<dbReference type="GO" id="GO:0050770">
    <property type="term" value="P:regulation of axonogenesis"/>
    <property type="evidence" value="ECO:0000315"/>
    <property type="project" value="MGI"/>
</dbReference>
<dbReference type="GO" id="GO:2000114">
    <property type="term" value="P:regulation of establishment of cell polarity"/>
    <property type="evidence" value="ECO:0000314"/>
    <property type="project" value="UniProtKB"/>
</dbReference>
<dbReference type="CDD" id="cd17696">
    <property type="entry name" value="RUN_RUFY3"/>
    <property type="match status" value="1"/>
</dbReference>
<dbReference type="FunFam" id="1.20.58.900:FF:000001">
    <property type="entry name" value="RUN and FYVE domain containing 2"/>
    <property type="match status" value="1"/>
</dbReference>
<dbReference type="FunFam" id="1.20.5.170:FF:000013">
    <property type="entry name" value="RUN and FYVE domain-containing 1"/>
    <property type="match status" value="1"/>
</dbReference>
<dbReference type="Gene3D" id="1.20.5.170">
    <property type="match status" value="1"/>
</dbReference>
<dbReference type="Gene3D" id="1.20.58.900">
    <property type="match status" value="1"/>
</dbReference>
<dbReference type="InterPro" id="IPR047335">
    <property type="entry name" value="RUFY1-3"/>
</dbReference>
<dbReference type="InterPro" id="IPR004012">
    <property type="entry name" value="Run_dom"/>
</dbReference>
<dbReference type="InterPro" id="IPR037213">
    <property type="entry name" value="Run_dom_sf"/>
</dbReference>
<dbReference type="InterPro" id="IPR047334">
    <property type="entry name" value="RUN_RUFY3"/>
</dbReference>
<dbReference type="PANTHER" id="PTHR45956:SF1">
    <property type="entry name" value="PROTEIN RUFY3"/>
    <property type="match status" value="1"/>
</dbReference>
<dbReference type="PANTHER" id="PTHR45956">
    <property type="entry name" value="RUN AND FYVE DOMAIN-CONTAINING PROTEIN 2-LIKE PROTEIN"/>
    <property type="match status" value="1"/>
</dbReference>
<dbReference type="Pfam" id="PF02759">
    <property type="entry name" value="RUN"/>
    <property type="match status" value="1"/>
</dbReference>
<dbReference type="SMART" id="SM00593">
    <property type="entry name" value="RUN"/>
    <property type="match status" value="1"/>
</dbReference>
<dbReference type="SUPFAM" id="SSF140741">
    <property type="entry name" value="RUN domain-like"/>
    <property type="match status" value="1"/>
</dbReference>
<dbReference type="PROSITE" id="PS50826">
    <property type="entry name" value="RUN"/>
    <property type="match status" value="1"/>
</dbReference>
<comment type="function">
    <text evidence="1 2 6">ARL8 effector that promotes the coupling of endolysosomes to dynein-dynactin for retrograde transport along microtubules. Acts by binding both GTP-bound ARL8 and dynein-dynactin. In nonneuronal cells, promotes concentration of endolysosomes in the juxtanuclear area. In hippocampal neurons, drives retrograde transport of endolysosomes from the axon to the soma (By similarity). Plays a role in the generation of neuronal polarity formation and axon growth (PubMed:24720729). Implicated in the formation of a single axon by developing neurons (PubMed:24720729). May inhibit the formation of additional axons by inhibition of PI3K in minor neuronal processes (By similarity). Plays a role in the formation of F-actin-enriched protrusive structures at the cell periphery (By similarity). Plays a role in cytoskeletal organization by regulating the subcellular localization of FSCN1 and DBN1 at axonal growth cones (PubMed:24720729).</text>
</comment>
<comment type="subunit">
    <text evidence="1 2 6">Interacts with PAK1 (By similarity). Interacts (via C-terminus) with Ras-related Rab-5 proteins (By similarity). Interacts (via C-terminus) with Ras-related Rap-2 proteins (By similarity). Interacts with PIK3CA and PIK3R1 (By similarity). Interacts (via N-terminus) with FSCN1; this interaction induces neuron axon development (PubMed:24720729). Interacts with DBN1 (PubMed:24720729). Interacts (via the second coiled coil) with GTP-, but not GDP-bound ARL8A and ARL8B. Interacts with dynactin/DCTN1 and the dynein intermediate chain DYNC1I1/2. Directly interacts with DYNC1LI1 (By similarity).</text>
</comment>
<comment type="subcellular location">
    <subcellularLocation>
        <location evidence="2">Cytoplasm</location>
    </subcellularLocation>
    <subcellularLocation>
        <location evidence="2">Endomembrane system</location>
    </subcellularLocation>
    <subcellularLocation>
        <location evidence="2">Cell projection</location>
        <location evidence="2">Invadopodium</location>
    </subcellularLocation>
    <subcellularLocation>
        <location evidence="6">Cell projection</location>
        <location evidence="6">Growth cone</location>
    </subcellularLocation>
    <subcellularLocation>
        <location evidence="6">Perikaryon</location>
    </subcellularLocation>
    <subcellularLocation>
        <location evidence="6">Cell projection</location>
    </subcellularLocation>
    <subcellularLocation>
        <location evidence="6">Cell projection</location>
        <location evidence="6">Filopodium</location>
    </subcellularLocation>
    <subcellularLocation>
        <location evidence="6">Cell projection</location>
        <location evidence="6">Lamellipodium</location>
    </subcellularLocation>
    <subcellularLocation>
        <location evidence="2">Lysosome</location>
    </subcellularLocation>
    <text evidence="1 2 6">Colocalizes with PAK1, F-actin, myosins and integrins in invadopodia at the cell periphery (By similarity). Colocalizes with Ras-related Rab-5 proteins in cytoplasmic vesicles (By similarity). Accumulates in axon growth cones in a F-actin-dependent manner (PubMed:24720729). Colocalizes with FSCN1 and F-actin at filipodia and lamellipodia of axonal growth cones (PubMed:24720729). Colocalizes with DBN1 and F-actin at transitional domain of the axonal growth cone (PubMed:24720729). Recruitment to endolysosomes partially depends upon the presence of ARL8 (By similarity).</text>
</comment>
<comment type="alternative products">
    <event type="alternative splicing"/>
    <isoform>
        <id>Q9D394-1</id>
        <name>1</name>
        <sequence type="displayed"/>
    </isoform>
    <isoform>
        <id>Q9D394-2</id>
        <name>2</name>
        <sequence type="described" ref="VSP_019792 VSP_019794"/>
    </isoform>
    <isoform>
        <id>Q9D394-3</id>
        <name>3</name>
        <sequence type="described" ref="VSP_019793"/>
    </isoform>
    <isoform>
        <id>Q9D394-4</id>
        <name>4</name>
        <sequence type="described" ref="VSP_019792"/>
    </isoform>
</comment>
<comment type="tissue specificity">
    <text evidence="6">Expressed in brain (at protein level) (PubMed:24720729).</text>
</comment>
<comment type="developmental stage">
    <text evidence="6">Expressed during the embryonic brain development from 11.5 dpc, onwards (PubMed:24720729). Expressed in the upper layers of the cortex at 11.5 dpc (PubMed:24720729). Expressed in the intermediate zone to the cortical plate of the cortex at 18.5 dpc (PubMed:24720729). Expressed in neurons (at protein level) (PubMed:24720729).</text>
</comment>
<comment type="domain">
    <text evidence="2">The second coiled coil domain is involved in the interaction with GTP-bound ARL8B.</text>
</comment>
<comment type="PTM">
    <text evidence="1 2">Phosphorylated by PAK1. Isoform 1 is partially phosphorylated.</text>
</comment>
<proteinExistence type="evidence at protein level"/>
<sequence>MSALTPPTDMPTPTTDKITQAAMETIYLCKFRVSMDGEWLCLRELDDISLTPDPEPTHEDPNYLMANERMNLMNMAKLSIKGLIESALNLGRTLDSDYAPLQQFFVVMEHCLKHGLKAKKTFLGQNKSFWGPLELVEKLVPEAAEITASVKDLPGLKTPVGRGRAWLRLALMQKKLSEYMKALINKKELLSEFYEVNALMMEEEGAIIAGLLVGLNVIDANFCMKGEDLDSQVGVIDFSMYLKDGNSSKGSEGDGQITAILDQKNYVEELNRHLNATVNNLQTKVDLLEKSNTKLTEELAVANNRIITLQEEMERVKEESSYLLESNRKGPKQDRTAEGQALSEARKHLKEETQLRLDVEKELELQISMRQEMELAMKMLEKDVCEKQDALVSLRQQLDDLRALKHELAFKLQSSDLGVKQKSELNSRLEEKTNQMAATIKQLEQSEKDLVKQAKTLNSAANKLIPKHH</sequence>
<name>RUFY3_MOUSE</name>
<accession>Q9D394</accession>
<accession>Q3U348</accession>
<accession>Q3UF96</accession>
<accession>Q6PE64</accession>
<accession>Q8VD10</accession>
<protein>
    <recommendedName>
        <fullName evidence="10">Protein RUFY3</fullName>
    </recommendedName>
    <alternativeName>
        <fullName evidence="9">Rap2-interacting protein x</fullName>
        <shortName evidence="9">RIPx</shortName>
    </alternativeName>
    <alternativeName>
        <fullName evidence="1">Single axon-regulated protein 1</fullName>
        <shortName evidence="1">Singar1</shortName>
    </alternativeName>
</protein>
<organism>
    <name type="scientific">Mus musculus</name>
    <name type="common">Mouse</name>
    <dbReference type="NCBI Taxonomy" id="10090"/>
    <lineage>
        <taxon>Eukaryota</taxon>
        <taxon>Metazoa</taxon>
        <taxon>Chordata</taxon>
        <taxon>Craniata</taxon>
        <taxon>Vertebrata</taxon>
        <taxon>Euteleostomi</taxon>
        <taxon>Mammalia</taxon>
        <taxon>Eutheria</taxon>
        <taxon>Euarchontoglires</taxon>
        <taxon>Glires</taxon>
        <taxon>Rodentia</taxon>
        <taxon>Myomorpha</taxon>
        <taxon>Muroidea</taxon>
        <taxon>Muridae</taxon>
        <taxon>Murinae</taxon>
        <taxon>Mus</taxon>
        <taxon>Mus</taxon>
    </lineage>
</organism>
<feature type="chain" id="PRO_0000245834" description="Protein RUFY3">
    <location>
        <begin position="1"/>
        <end position="469"/>
    </location>
</feature>
<feature type="domain" description="RUN" evidence="4">
    <location>
        <begin position="95"/>
        <end position="227"/>
    </location>
</feature>
<feature type="region of interest" description="Disordered" evidence="5">
    <location>
        <begin position="321"/>
        <end position="342"/>
    </location>
</feature>
<feature type="coiled-coil region" evidence="3">
    <location>
        <begin position="271"/>
        <end position="362"/>
    </location>
</feature>
<feature type="coiled-coil region" evidence="3">
    <location>
        <begin position="422"/>
        <end position="463"/>
    </location>
</feature>
<feature type="compositionally biased region" description="Basic and acidic residues" evidence="5">
    <location>
        <begin position="321"/>
        <end position="337"/>
    </location>
</feature>
<feature type="modified residue" description="Phosphothreonine" evidence="1">
    <location>
        <position position="5"/>
    </location>
</feature>
<feature type="modified residue" description="Phosphothreonine" evidence="1">
    <location>
        <position position="12"/>
    </location>
</feature>
<feature type="modified residue" description="Phosphoserine" evidence="13">
    <location>
        <position position="34"/>
    </location>
</feature>
<feature type="modified residue" description="Phosphoserine" evidence="13">
    <location>
        <position position="49"/>
    </location>
</feature>
<feature type="modified residue" description="Phosphothreonine" evidence="13">
    <location>
        <position position="51"/>
    </location>
</feature>
<feature type="splice variant" id="VSP_019792" description="In isoform 2 and isoform 4." evidence="8">
    <original>MSALTPPTDMPTPTTDKITQAAMETIYLCKFRVSMDGEWLCLRELDDISLTPDPEPTHED</original>
    <variation>MAESPAPGAAAESCGEEQERGGERRPSEPLEPRGASARGADREDEAGPSEPDSPVAAPFFLLYPGDGGAGFTARPPPQRAWRTPPSPGSPLPFLLLSYPSGGSGGGGKHH</variation>
    <location>
        <begin position="1"/>
        <end position="60"/>
    </location>
</feature>
<feature type="splice variant" id="VSP_019793" description="In isoform 3." evidence="7">
    <original>H</original>
    <variation>HEDSWEDLTDLVEQVRADP</variation>
    <location>
        <position position="58"/>
    </location>
</feature>
<feature type="splice variant" id="VSP_019794" description="In isoform 2." evidence="8">
    <original>SEKDLVKQAKTLNSAANKLIPKHH</original>
    <variation>RLRQAERGRQSAELDNRLFKQDFGDKINSLQLEVEALTRQRTQLELELKQEKERKSQNRGTPGKGAQKPELRMDGKHRIQEENVKLKKPLEESHRLLTHPAEEQGQPSLSEKPQVCQLCQEDDSLTKNTCRNCRGTFCNACTTNELPLPSSIKPERVCNPCHEQLIKQYS</variation>
    <location>
        <begin position="446"/>
        <end position="469"/>
    </location>
</feature>
<feature type="sequence conflict" description="In Ref. 3; AAH17648." evidence="10" ref="3">
    <original>M</original>
    <variation>I</variation>
    <location>
        <position position="224"/>
    </location>
</feature>
<feature type="sequence conflict" description="In Ref. 1; BAE32941." evidence="10" ref="1">
    <original>S</original>
    <variation>G</variation>
    <location>
        <position position="251"/>
    </location>
</feature>
<feature type="helix" evidence="15">
    <location>
        <begin position="66"/>
        <end position="90"/>
    </location>
</feature>
<feature type="helix" evidence="15">
    <location>
        <begin position="99"/>
        <end position="113"/>
    </location>
</feature>
<feature type="strand" evidence="14">
    <location>
        <begin position="114"/>
        <end position="116"/>
    </location>
</feature>
<feature type="helix" evidence="15">
    <location>
        <begin position="130"/>
        <end position="139"/>
    </location>
</feature>
<feature type="helix" evidence="15">
    <location>
        <begin position="141"/>
        <end position="143"/>
    </location>
</feature>
<feature type="helix" evidence="15">
    <location>
        <begin position="144"/>
        <end position="151"/>
    </location>
</feature>
<feature type="helix" evidence="15">
    <location>
        <begin position="159"/>
        <end position="173"/>
    </location>
</feature>
<feature type="helix" evidence="15">
    <location>
        <begin position="176"/>
        <end position="184"/>
    </location>
</feature>
<feature type="helix" evidence="15">
    <location>
        <begin position="187"/>
        <end position="190"/>
    </location>
</feature>
<feature type="turn" evidence="15">
    <location>
        <begin position="191"/>
        <end position="193"/>
    </location>
</feature>
<feature type="helix" evidence="15">
    <location>
        <begin position="199"/>
        <end position="201"/>
    </location>
</feature>
<feature type="helix" evidence="15">
    <location>
        <begin position="203"/>
        <end position="211"/>
    </location>
</feature>
<feature type="helix" evidence="15">
    <location>
        <begin position="212"/>
        <end position="217"/>
    </location>
</feature>
<feature type="helix" evidence="15">
    <location>
        <begin position="226"/>
        <end position="229"/>
    </location>
</feature>
<feature type="modified residue" description="Phosphoserine" evidence="13">
    <location sequence="Q9D394-2">
        <position position="27"/>
    </location>
</feature>
<feature type="modified residue" description="Phosphoserine" evidence="13">
    <location sequence="Q9D394-2">
        <position position="49"/>
    </location>
</feature>
<feature type="modified residue" description="Phosphoserine" evidence="12 13">
    <location sequence="Q9D394-2">
        <position position="53"/>
    </location>
</feature>
<feature type="sequence conflict" description="In Ref. 1; BAE32941." evidence="10" ref="1">
    <original>V</original>
    <variation>A</variation>
    <location sequence="Q9D394-2">
        <position position="55"/>
    </location>
</feature>
<feature type="modified residue" description="Phosphoserine" evidence="13">
    <location sequence="Q9D394-4">
        <position position="27"/>
    </location>
</feature>
<feature type="modified residue" description="Phosphoserine" evidence="13">
    <location sequence="Q9D394-4">
        <position position="49"/>
    </location>
</feature>
<feature type="modified residue" description="Phosphoserine" evidence="12 13">
    <location sequence="Q9D394-4">
        <position position="53"/>
    </location>
</feature>
<keyword id="KW-0002">3D-structure</keyword>
<keyword id="KW-0025">Alternative splicing</keyword>
<keyword id="KW-0965">Cell junction</keyword>
<keyword id="KW-0966">Cell projection</keyword>
<keyword id="KW-0175">Coiled coil</keyword>
<keyword id="KW-0963">Cytoplasm</keyword>
<keyword id="KW-0217">Developmental protein</keyword>
<keyword id="KW-0221">Differentiation</keyword>
<keyword id="KW-0458">Lysosome</keyword>
<keyword id="KW-0472">Membrane</keyword>
<keyword id="KW-0524">Neurogenesis</keyword>
<keyword id="KW-0553">Oncogene</keyword>
<keyword id="KW-0597">Phosphoprotein</keyword>
<keyword id="KW-1185">Reference proteome</keyword>
<evidence type="ECO:0000250" key="1">
    <source>
        <dbReference type="UniProtKB" id="Q5FVJ0"/>
    </source>
</evidence>
<evidence type="ECO:0000250" key="2">
    <source>
        <dbReference type="UniProtKB" id="Q7L099"/>
    </source>
</evidence>
<evidence type="ECO:0000255" key="3"/>
<evidence type="ECO:0000255" key="4">
    <source>
        <dbReference type="PROSITE-ProRule" id="PRU00178"/>
    </source>
</evidence>
<evidence type="ECO:0000256" key="5">
    <source>
        <dbReference type="SAM" id="MobiDB-lite"/>
    </source>
</evidence>
<evidence type="ECO:0000269" key="6">
    <source>
    </source>
</evidence>
<evidence type="ECO:0000303" key="7">
    <source>
    </source>
</evidence>
<evidence type="ECO:0000303" key="8">
    <source>
    </source>
</evidence>
<evidence type="ECO:0000303" key="9">
    <source>
    </source>
</evidence>
<evidence type="ECO:0000305" key="10"/>
<evidence type="ECO:0000312" key="11">
    <source>
        <dbReference type="MGI" id="MGI:106484"/>
    </source>
</evidence>
<evidence type="ECO:0007744" key="12">
    <source>
    </source>
</evidence>
<evidence type="ECO:0007744" key="13">
    <source>
    </source>
</evidence>
<evidence type="ECO:0007829" key="14">
    <source>
        <dbReference type="PDB" id="2DWG"/>
    </source>
</evidence>
<evidence type="ECO:0007829" key="15">
    <source>
        <dbReference type="PDB" id="2DWK"/>
    </source>
</evidence>
<reference key="1">
    <citation type="journal article" date="2005" name="Science">
        <title>The transcriptional landscape of the mammalian genome.</title>
        <authorList>
            <person name="Carninci P."/>
            <person name="Kasukawa T."/>
            <person name="Katayama S."/>
            <person name="Gough J."/>
            <person name="Frith M.C."/>
            <person name="Maeda N."/>
            <person name="Oyama R."/>
            <person name="Ravasi T."/>
            <person name="Lenhard B."/>
            <person name="Wells C."/>
            <person name="Kodzius R."/>
            <person name="Shimokawa K."/>
            <person name="Bajic V.B."/>
            <person name="Brenner S.E."/>
            <person name="Batalov S."/>
            <person name="Forrest A.R."/>
            <person name="Zavolan M."/>
            <person name="Davis M.J."/>
            <person name="Wilming L.G."/>
            <person name="Aidinis V."/>
            <person name="Allen J.E."/>
            <person name="Ambesi-Impiombato A."/>
            <person name="Apweiler R."/>
            <person name="Aturaliya R.N."/>
            <person name="Bailey T.L."/>
            <person name="Bansal M."/>
            <person name="Baxter L."/>
            <person name="Beisel K.W."/>
            <person name="Bersano T."/>
            <person name="Bono H."/>
            <person name="Chalk A.M."/>
            <person name="Chiu K.P."/>
            <person name="Choudhary V."/>
            <person name="Christoffels A."/>
            <person name="Clutterbuck D.R."/>
            <person name="Crowe M.L."/>
            <person name="Dalla E."/>
            <person name="Dalrymple B.P."/>
            <person name="de Bono B."/>
            <person name="Della Gatta G."/>
            <person name="di Bernardo D."/>
            <person name="Down T."/>
            <person name="Engstrom P."/>
            <person name="Fagiolini M."/>
            <person name="Faulkner G."/>
            <person name="Fletcher C.F."/>
            <person name="Fukushima T."/>
            <person name="Furuno M."/>
            <person name="Futaki S."/>
            <person name="Gariboldi M."/>
            <person name="Georgii-Hemming P."/>
            <person name="Gingeras T.R."/>
            <person name="Gojobori T."/>
            <person name="Green R.E."/>
            <person name="Gustincich S."/>
            <person name="Harbers M."/>
            <person name="Hayashi Y."/>
            <person name="Hensch T.K."/>
            <person name="Hirokawa N."/>
            <person name="Hill D."/>
            <person name="Huminiecki L."/>
            <person name="Iacono M."/>
            <person name="Ikeo K."/>
            <person name="Iwama A."/>
            <person name="Ishikawa T."/>
            <person name="Jakt M."/>
            <person name="Kanapin A."/>
            <person name="Katoh M."/>
            <person name="Kawasawa Y."/>
            <person name="Kelso J."/>
            <person name="Kitamura H."/>
            <person name="Kitano H."/>
            <person name="Kollias G."/>
            <person name="Krishnan S.P."/>
            <person name="Kruger A."/>
            <person name="Kummerfeld S.K."/>
            <person name="Kurochkin I.V."/>
            <person name="Lareau L.F."/>
            <person name="Lazarevic D."/>
            <person name="Lipovich L."/>
            <person name="Liu J."/>
            <person name="Liuni S."/>
            <person name="McWilliam S."/>
            <person name="Madan Babu M."/>
            <person name="Madera M."/>
            <person name="Marchionni L."/>
            <person name="Matsuda H."/>
            <person name="Matsuzawa S."/>
            <person name="Miki H."/>
            <person name="Mignone F."/>
            <person name="Miyake S."/>
            <person name="Morris K."/>
            <person name="Mottagui-Tabar S."/>
            <person name="Mulder N."/>
            <person name="Nakano N."/>
            <person name="Nakauchi H."/>
            <person name="Ng P."/>
            <person name="Nilsson R."/>
            <person name="Nishiguchi S."/>
            <person name="Nishikawa S."/>
            <person name="Nori F."/>
            <person name="Ohara O."/>
            <person name="Okazaki Y."/>
            <person name="Orlando V."/>
            <person name="Pang K.C."/>
            <person name="Pavan W.J."/>
            <person name="Pavesi G."/>
            <person name="Pesole G."/>
            <person name="Petrovsky N."/>
            <person name="Piazza S."/>
            <person name="Reed J."/>
            <person name="Reid J.F."/>
            <person name="Ring B.Z."/>
            <person name="Ringwald M."/>
            <person name="Rost B."/>
            <person name="Ruan Y."/>
            <person name="Salzberg S.L."/>
            <person name="Sandelin A."/>
            <person name="Schneider C."/>
            <person name="Schoenbach C."/>
            <person name="Sekiguchi K."/>
            <person name="Semple C.A."/>
            <person name="Seno S."/>
            <person name="Sessa L."/>
            <person name="Sheng Y."/>
            <person name="Shibata Y."/>
            <person name="Shimada H."/>
            <person name="Shimada K."/>
            <person name="Silva D."/>
            <person name="Sinclair B."/>
            <person name="Sperling S."/>
            <person name="Stupka E."/>
            <person name="Sugiura K."/>
            <person name="Sultana R."/>
            <person name="Takenaka Y."/>
            <person name="Taki K."/>
            <person name="Tammoja K."/>
            <person name="Tan S.L."/>
            <person name="Tang S."/>
            <person name="Taylor M.S."/>
            <person name="Tegner J."/>
            <person name="Teichmann S.A."/>
            <person name="Ueda H.R."/>
            <person name="van Nimwegen E."/>
            <person name="Verardo R."/>
            <person name="Wei C.L."/>
            <person name="Yagi K."/>
            <person name="Yamanishi H."/>
            <person name="Zabarovsky E."/>
            <person name="Zhu S."/>
            <person name="Zimmer A."/>
            <person name="Hide W."/>
            <person name="Bult C."/>
            <person name="Grimmond S.M."/>
            <person name="Teasdale R.D."/>
            <person name="Liu E.T."/>
            <person name="Brusic V."/>
            <person name="Quackenbush J."/>
            <person name="Wahlestedt C."/>
            <person name="Mattick J.S."/>
            <person name="Hume D.A."/>
            <person name="Kai C."/>
            <person name="Sasaki D."/>
            <person name="Tomaru Y."/>
            <person name="Fukuda S."/>
            <person name="Kanamori-Katayama M."/>
            <person name="Suzuki M."/>
            <person name="Aoki J."/>
            <person name="Arakawa T."/>
            <person name="Iida J."/>
            <person name="Imamura K."/>
            <person name="Itoh M."/>
            <person name="Kato T."/>
            <person name="Kawaji H."/>
            <person name="Kawagashira N."/>
            <person name="Kawashima T."/>
            <person name="Kojima M."/>
            <person name="Kondo S."/>
            <person name="Konno H."/>
            <person name="Nakano K."/>
            <person name="Ninomiya N."/>
            <person name="Nishio T."/>
            <person name="Okada M."/>
            <person name="Plessy C."/>
            <person name="Shibata K."/>
            <person name="Shiraki T."/>
            <person name="Suzuki S."/>
            <person name="Tagami M."/>
            <person name="Waki K."/>
            <person name="Watahiki A."/>
            <person name="Okamura-Oho Y."/>
            <person name="Suzuki H."/>
            <person name="Kawai J."/>
            <person name="Hayashizaki Y."/>
        </authorList>
    </citation>
    <scope>NUCLEOTIDE SEQUENCE [LARGE SCALE MRNA] (ISOFORMS 1 AND 2)</scope>
    <scope>NUCLEOTIDE SEQUENCE [LARGE SCALE MRNA] OF 27-469 (ISOFORM 4)</scope>
    <source>
        <strain>C57BL/6J</strain>
        <strain>NOD</strain>
        <tissue>Hippocampus</tissue>
        <tissue>Medulla oblongata</tissue>
        <tissue>Sympathetic ganglion</tissue>
    </source>
</reference>
<reference key="2">
    <citation type="submission" date="2005-07" db="EMBL/GenBank/DDBJ databases">
        <title>Cloning of mouse full open reading frames in Gateway(R) system entry vector (pDONR201).</title>
        <authorList>
            <person name="Ebert L."/>
            <person name="Muenstermann E."/>
            <person name="Schatten R."/>
            <person name="Henze S."/>
            <person name="Bohn E."/>
            <person name="Mollenhauer J."/>
            <person name="Wiemann S."/>
            <person name="Schick M."/>
            <person name="Korn B."/>
        </authorList>
    </citation>
    <scope>NUCLEOTIDE SEQUENCE [LARGE SCALE MRNA] (ISOFORM 1)</scope>
</reference>
<reference key="3">
    <citation type="journal article" date="2004" name="Genome Res.">
        <title>The status, quality, and expansion of the NIH full-length cDNA project: the Mammalian Gene Collection (MGC).</title>
        <authorList>
            <consortium name="The MGC Project Team"/>
        </authorList>
    </citation>
    <scope>NUCLEOTIDE SEQUENCE [LARGE SCALE MRNA] (ISOFORMS 1 AND 3)</scope>
    <source>
        <strain>C57BL/6J</strain>
        <tissue>Brain</tissue>
        <tissue>Eye</tissue>
    </source>
</reference>
<reference key="4">
    <citation type="journal article" date="2006" name="Mol. Cell. Proteomics">
        <title>Comprehensive identification of phosphorylation sites in postsynaptic density preparations.</title>
        <authorList>
            <person name="Trinidad J.C."/>
            <person name="Specht C.G."/>
            <person name="Thalhammer A."/>
            <person name="Schoepfer R."/>
            <person name="Burlingame A.L."/>
        </authorList>
    </citation>
    <scope>IDENTIFICATION BY MASS SPECTROMETRY [LARGE SCALE ANALYSIS]</scope>
    <source>
        <tissue>Brain</tissue>
    </source>
</reference>
<reference key="5">
    <citation type="journal article" date="2009" name="Mol. Cell. Proteomics">
        <title>Large scale localization of protein phosphorylation by use of electron capture dissociation mass spectrometry.</title>
        <authorList>
            <person name="Sweet S.M."/>
            <person name="Bailey C.M."/>
            <person name="Cunningham D.L."/>
            <person name="Heath J.K."/>
            <person name="Cooper H.J."/>
        </authorList>
    </citation>
    <scope>PHOSPHORYLATION [LARGE SCALE ANALYSIS] AT SER-53 (ISOFORMS 2 AND 4)</scope>
    <scope>IDENTIFICATION BY MASS SPECTROMETRY [LARGE SCALE ANALYSIS]</scope>
    <source>
        <tissue>Embryonic fibroblast</tissue>
    </source>
</reference>
<reference key="6">
    <citation type="journal article" date="2010" name="Cell">
        <title>A tissue-specific atlas of mouse protein phosphorylation and expression.</title>
        <authorList>
            <person name="Huttlin E.L."/>
            <person name="Jedrychowski M.P."/>
            <person name="Elias J.E."/>
            <person name="Goswami T."/>
            <person name="Rad R."/>
            <person name="Beausoleil S.A."/>
            <person name="Villen J."/>
            <person name="Haas W."/>
            <person name="Sowa M.E."/>
            <person name="Gygi S.P."/>
        </authorList>
    </citation>
    <scope>PHOSPHORYLATION [LARGE SCALE ANALYSIS] AT SER-34; SER-49 AND THR-51</scope>
    <scope>PHOSPHORYLATION [LARGE SCALE ANALYSIS] AT SER-27; SER-49 AND SER-53 (ISOFORMS 2 AND 4)</scope>
    <scope>IDENTIFICATION BY MASS SPECTROMETRY [LARGE SCALE ANALYSIS]</scope>
    <source>
        <tissue>Brain</tissue>
        <tissue>Brown adipose tissue</tissue>
        <tissue>Kidney</tissue>
        <tissue>Liver</tissue>
        <tissue>Lung</tissue>
        <tissue>Pancreas</tissue>
        <tissue>Spleen</tissue>
        <tissue>Testis</tissue>
    </source>
</reference>
<reference key="7">
    <citation type="journal article" date="2014" name="J. Neurochem.">
        <title>Rufy3, a protein specifically expressed in neurons, interacts with actin-bundling protein Fascin to control the growth of axons.</title>
        <authorList>
            <person name="Wei Z."/>
            <person name="Sun M."/>
            <person name="Liu X."/>
            <person name="Zhang J."/>
            <person name="Jin Y."/>
        </authorList>
    </citation>
    <scope>FUNCTION</scope>
    <scope>SUBCELLULAR LOCATION</scope>
    <scope>INTERACTION WITH FSCN1 AND DBN1</scope>
    <scope>TISSUE SPECIFICITY</scope>
    <scope>DEVELOPMENTAL STAGE</scope>
</reference>
<reference key="8">
    <citation type="journal article" date="2006" name="J. Biol. Chem.">
        <title>Crystal structure of the RUN domain of the RAP2-interacting protein x.</title>
        <authorList>
            <person name="Kukimoto-Niino M."/>
            <person name="Takagi T."/>
            <person name="Akasaka R."/>
            <person name="Murayama K."/>
            <person name="Uchikubo-Kamo T."/>
            <person name="Terada T."/>
            <person name="Inoue M."/>
            <person name="Watanabe S."/>
            <person name="Tanaka A."/>
            <person name="Hayashizaki Y."/>
            <person name="Kigawa T."/>
            <person name="Shirouzu M."/>
            <person name="Yokoyama S."/>
        </authorList>
    </citation>
    <scope>X-RAY CRYSTALLOGRAPHY (2.2 ANGSTROMS) OF 65-247</scope>
</reference>
<gene>
    <name evidence="11" type="primary">Rufy3</name>
    <name type="synonym">D5Bwg0860e</name>
    <name evidence="9" type="synonym">Ripx</name>
</gene>